<name>CMOJ_BACSU</name>
<organism>
    <name type="scientific">Bacillus subtilis (strain 168)</name>
    <dbReference type="NCBI Taxonomy" id="224308"/>
    <lineage>
        <taxon>Bacteria</taxon>
        <taxon>Bacillati</taxon>
        <taxon>Bacillota</taxon>
        <taxon>Bacilli</taxon>
        <taxon>Bacillales</taxon>
        <taxon>Bacillaceae</taxon>
        <taxon>Bacillus</taxon>
    </lineage>
</organism>
<evidence type="ECO:0000269" key="1">
    <source>
    </source>
</evidence>
<evidence type="ECO:0000269" key="2">
    <source>
    </source>
</evidence>
<evidence type="ECO:0000269" key="3">
    <source>
    </source>
</evidence>
<evidence type="ECO:0000269" key="4">
    <source ref="6"/>
</evidence>
<evidence type="ECO:0000269" key="5">
    <source ref="7"/>
</evidence>
<evidence type="ECO:0000303" key="6">
    <source>
    </source>
</evidence>
<evidence type="ECO:0000305" key="7"/>
<evidence type="ECO:0000305" key="8">
    <source>
    </source>
</evidence>
<evidence type="ECO:0000305" key="9">
    <source ref="6"/>
</evidence>
<evidence type="ECO:0007744" key="10">
    <source>
        <dbReference type="PDB" id="1TVL"/>
    </source>
</evidence>
<evidence type="ECO:0007744" key="11">
    <source>
        <dbReference type="PDB" id="1YW1"/>
    </source>
</evidence>
<evidence type="ECO:0007744" key="12">
    <source>
        <dbReference type="PDB" id="6ASK"/>
    </source>
</evidence>
<evidence type="ECO:0007744" key="13">
    <source>
        <dbReference type="PDB" id="6ASL"/>
    </source>
</evidence>
<evidence type="ECO:0007829" key="14">
    <source>
        <dbReference type="PDB" id="6ASK"/>
    </source>
</evidence>
<dbReference type="EC" id="1.14.14.-" evidence="3"/>
<dbReference type="EMBL" id="AF008220">
    <property type="protein sequence ID" value="AAC00332.1"/>
    <property type="molecule type" value="Genomic_DNA"/>
</dbReference>
<dbReference type="EMBL" id="AL009126">
    <property type="protein sequence ID" value="CAB14891.1"/>
    <property type="molecule type" value="Genomic_DNA"/>
</dbReference>
<dbReference type="PIR" id="E69997">
    <property type="entry name" value="E69997"/>
</dbReference>
<dbReference type="RefSeq" id="NP_390809.1">
    <property type="nucleotide sequence ID" value="NC_000964.3"/>
</dbReference>
<dbReference type="RefSeq" id="WP_004398733.1">
    <property type="nucleotide sequence ID" value="NZ_OZ025638.1"/>
</dbReference>
<dbReference type="PDB" id="1TVL">
    <property type="method" value="X-ray"/>
    <property type="resolution" value="2.10 A"/>
    <property type="chains" value="A=2-442"/>
</dbReference>
<dbReference type="PDB" id="1YW1">
    <property type="method" value="X-ray"/>
    <property type="resolution" value="2.81 A"/>
    <property type="chains" value="A=1-442"/>
</dbReference>
<dbReference type="PDB" id="6ASK">
    <property type="method" value="X-ray"/>
    <property type="resolution" value="1.69 A"/>
    <property type="chains" value="A=1-442"/>
</dbReference>
<dbReference type="PDB" id="6ASL">
    <property type="method" value="X-ray"/>
    <property type="resolution" value="1.90 A"/>
    <property type="chains" value="A=1-442"/>
</dbReference>
<dbReference type="PDBsum" id="1TVL"/>
<dbReference type="PDBsum" id="1YW1"/>
<dbReference type="PDBsum" id="6ASK"/>
<dbReference type="PDBsum" id="6ASL"/>
<dbReference type="SMR" id="O34974"/>
<dbReference type="FunCoup" id="O34974">
    <property type="interactions" value="106"/>
</dbReference>
<dbReference type="STRING" id="224308.BSU29310"/>
<dbReference type="DrugBank" id="DB02379">
    <property type="generic name" value="Beta-D-Glucose"/>
</dbReference>
<dbReference type="DrugBank" id="DB03247">
    <property type="generic name" value="Flavin mononucleotide"/>
</dbReference>
<dbReference type="PaxDb" id="224308-BSU29310"/>
<dbReference type="EnsemblBacteria" id="CAB14891">
    <property type="protein sequence ID" value="CAB14891"/>
    <property type="gene ID" value="BSU_29310"/>
</dbReference>
<dbReference type="GeneID" id="937365"/>
<dbReference type="KEGG" id="bsu:BSU29310"/>
<dbReference type="PATRIC" id="fig|224308.179.peg.3185"/>
<dbReference type="eggNOG" id="COG2141">
    <property type="taxonomic scope" value="Bacteria"/>
</dbReference>
<dbReference type="InParanoid" id="O34974"/>
<dbReference type="OrthoDB" id="3265338at2"/>
<dbReference type="PhylomeDB" id="O34974"/>
<dbReference type="BioCyc" id="BSUB:BSU29310-MONOMER"/>
<dbReference type="BioCyc" id="MetaCyc:BSU29310-MONOMER"/>
<dbReference type="EvolutionaryTrace" id="O34974"/>
<dbReference type="Proteomes" id="UP000001570">
    <property type="component" value="Chromosome"/>
</dbReference>
<dbReference type="GO" id="GO:0004497">
    <property type="term" value="F:monooxygenase activity"/>
    <property type="evidence" value="ECO:0007669"/>
    <property type="project" value="UniProtKB-KW"/>
</dbReference>
<dbReference type="GO" id="GO:0016705">
    <property type="term" value="F:oxidoreductase activity, acting on paired donors, with incorporation or reduction of molecular oxygen"/>
    <property type="evidence" value="ECO:0007669"/>
    <property type="project" value="InterPro"/>
</dbReference>
<dbReference type="CDD" id="cd01095">
    <property type="entry name" value="Nitrilotriacetate_monoxgenase"/>
    <property type="match status" value="1"/>
</dbReference>
<dbReference type="Gene3D" id="3.20.20.30">
    <property type="entry name" value="Luciferase-like domain"/>
    <property type="match status" value="1"/>
</dbReference>
<dbReference type="InterPro" id="IPR051260">
    <property type="entry name" value="Diverse_substr_monoxygenases"/>
</dbReference>
<dbReference type="InterPro" id="IPR011251">
    <property type="entry name" value="Luciferase-like_dom"/>
</dbReference>
<dbReference type="InterPro" id="IPR036661">
    <property type="entry name" value="Luciferase-like_sf"/>
</dbReference>
<dbReference type="InterPro" id="IPR016215">
    <property type="entry name" value="NTA_MOA"/>
</dbReference>
<dbReference type="NCBIfam" id="TIGR03860">
    <property type="entry name" value="FMN_nitrolo"/>
    <property type="match status" value="1"/>
</dbReference>
<dbReference type="PANTHER" id="PTHR30011">
    <property type="entry name" value="ALKANESULFONATE MONOOXYGENASE-RELATED"/>
    <property type="match status" value="1"/>
</dbReference>
<dbReference type="PANTHER" id="PTHR30011:SF16">
    <property type="entry name" value="C2H2 FINGER DOMAIN TRANSCRIPTION FACTOR (EUROFUNG)-RELATED"/>
    <property type="match status" value="1"/>
</dbReference>
<dbReference type="Pfam" id="PF00296">
    <property type="entry name" value="Bac_luciferase"/>
    <property type="match status" value="1"/>
</dbReference>
<dbReference type="PIRSF" id="PIRSF000337">
    <property type="entry name" value="NTA_MOA"/>
    <property type="match status" value="1"/>
</dbReference>
<dbReference type="SUPFAM" id="SSF51679">
    <property type="entry name" value="Bacterial luciferase-like"/>
    <property type="match status" value="1"/>
</dbReference>
<sequence length="442" mass="49411">MTRADFIQFGAMIHGVGGTTDGWRHPDVDPSASTNIEFYMKKAQTAEKGLFSFIFIADGLFISEKSIPHFLNRFEPITILSALASVTKNIGLVGTFSTSFTEPFTISRQLMSLDHISGGRAGWNLVTSPQEGAARNHSKSNLPEHTERYEIAQEHLDVVRGLWNSWEHDAFIHNKKTGQFFDQAKLHRLNHKGKYFQVEGPLNIGRSKQGEPVVFQAGSSETGRQFAAKNADAIFTHSNSLEETKAFYADVKSRAADEGRDPSSVRIFPGISPIVADTEEEAEKKYREFAELIPIENAVTYLARFFDDYDLSVYPLDEPFPDIGDVGKNAFQSTTDRIKREAKARNLTLREVAQEMAFPRTLFIGTPERVASLIETWFNAEAADGFIVGSDIPGTLDAFVEKVIPILQERGLYRQDYRGGTLRENLGLGIPQHQSVLHSSHH</sequence>
<proteinExistence type="evidence at protein level"/>
<gene>
    <name evidence="6" type="primary">cmoJ</name>
    <name type="synonym">moxC</name>
    <name type="synonym">ytnJ</name>
    <name type="ordered locus">BSU29310</name>
</gene>
<comment type="function">
    <text evidence="3">Involved in a cysteine salvage pathway from S-alkylcysteine. Catalyzes the C-S bond cleavage in N-acetyl-S-benzyl-L-cysteine sulfoxide leading to N-acetyl-S-hydroxy-L-cysteine and benzaldehyde. This pathway is likely important in the catabolism of alkylated cysteine generated by proteolysis of alkylated glutathione formed in the detoxification of a wide range of electrophiles. Has much less efficient activity with N-acetyl-S-methyl-L-cysteine sulfoxide as substrate. Cannot use S-alkylated L-cysteine sulfones and ketone analogs as substrates, demonstrating that the sulfoxide is required for activity.</text>
</comment>
<comment type="catalytic activity">
    <reaction evidence="3">
        <text>(R)-N-acetyl-S-benzyl-L-cysteine sulfoxide + FMNH2 + O2 = N-acetyl-S-hydroxy-L-cysteine + benzaldehyde + FMN + H2O + H(+)</text>
        <dbReference type="Rhea" id="RHEA:75527"/>
        <dbReference type="ChEBI" id="CHEBI:15377"/>
        <dbReference type="ChEBI" id="CHEBI:15378"/>
        <dbReference type="ChEBI" id="CHEBI:15379"/>
        <dbReference type="ChEBI" id="CHEBI:17169"/>
        <dbReference type="ChEBI" id="CHEBI:57618"/>
        <dbReference type="ChEBI" id="CHEBI:58210"/>
        <dbReference type="ChEBI" id="CHEBI:194343"/>
        <dbReference type="ChEBI" id="CHEBI:194344"/>
    </reaction>
    <physiologicalReaction direction="left-to-right" evidence="8">
        <dbReference type="Rhea" id="RHEA:75528"/>
    </physiologicalReaction>
</comment>
<comment type="biophysicochemical properties">
    <kinetics>
        <KM evidence="3">7.1 uM for N-acetyl-S-benzyl-L-cysteine sulfoxide</KM>
        <KM evidence="3">322 uM for N-acetyl-S-methyl-L-cysteine sulfoxide</KM>
        <KM evidence="3">6.4 uM for N-acetyl-S-(p-hydroxybenzyl)cysteine sulfoxide</KM>
        <KM evidence="3">4.76 uM for N-acetyl-S-(p-methoxybenzyl)cysteine sulfoxide</KM>
        <KM evidence="3">114 uM for N-acetyl-S-carboxymethylcysteine sulfoxide</KM>
        <text evidence="3">kcat is 2.66 sec(-1) with N-acetyl-S-benzyl-L-cysteine sulfoxide as substrate. kcat is 0.18 sec(-1) with N-acetyl-S-methyl-L-cysteine sulfoxide as substrate. kcat is 1.92 sec(-1) with N-acetyl-S-(p-hydroxybenzyl)cysteine sulfoxide as substrate. kcat is 1.73 sec(-1) with N-acetyl-S-(p-methoxybenzyl)cysteine sulfoxide as substrate. kcat is 1.71 sec(-1) with N-acetyl-S-carboxymethylcysteine sulfoxide as substrate.</text>
    </kinetics>
</comment>
<comment type="pathway">
    <text evidence="8">Amino-acid metabolism.</text>
</comment>
<comment type="subunit">
    <text evidence="9">Homodimer.</text>
</comment>
<comment type="induction">
    <text evidence="2">Induced when methionine is the sulfur source, but not by sulfate.</text>
</comment>
<comment type="disruption phenotype">
    <text evidence="1">Reduced growth with methionine or methionine sulfoxide as unique source of sulfur.</text>
</comment>
<comment type="similarity">
    <text evidence="7">Belongs to the NtaA/SnaA/DszA monooxygenase family.</text>
</comment>
<accession>O34974</accession>
<accession>Q795U8</accession>
<reference key="1">
    <citation type="journal article" date="1997" name="Microbiology">
        <title>Sequencing and functional annotation of the Bacillus subtilis genes in the 200 kb rrnB-dnaB region.</title>
        <authorList>
            <person name="Lapidus A."/>
            <person name="Galleron N."/>
            <person name="Sorokin A."/>
            <person name="Ehrlich S.D."/>
        </authorList>
    </citation>
    <scope>NUCLEOTIDE SEQUENCE [GENOMIC DNA]</scope>
    <source>
        <strain>168</strain>
    </source>
</reference>
<reference key="2">
    <citation type="journal article" date="1997" name="Nature">
        <title>The complete genome sequence of the Gram-positive bacterium Bacillus subtilis.</title>
        <authorList>
            <person name="Kunst F."/>
            <person name="Ogasawara N."/>
            <person name="Moszer I."/>
            <person name="Albertini A.M."/>
            <person name="Alloni G."/>
            <person name="Azevedo V."/>
            <person name="Bertero M.G."/>
            <person name="Bessieres P."/>
            <person name="Bolotin A."/>
            <person name="Borchert S."/>
            <person name="Borriss R."/>
            <person name="Boursier L."/>
            <person name="Brans A."/>
            <person name="Braun M."/>
            <person name="Brignell S.C."/>
            <person name="Bron S."/>
            <person name="Brouillet S."/>
            <person name="Bruschi C.V."/>
            <person name="Caldwell B."/>
            <person name="Capuano V."/>
            <person name="Carter N.M."/>
            <person name="Choi S.-K."/>
            <person name="Codani J.-J."/>
            <person name="Connerton I.F."/>
            <person name="Cummings N.J."/>
            <person name="Daniel R.A."/>
            <person name="Denizot F."/>
            <person name="Devine K.M."/>
            <person name="Duesterhoeft A."/>
            <person name="Ehrlich S.D."/>
            <person name="Emmerson P.T."/>
            <person name="Entian K.-D."/>
            <person name="Errington J."/>
            <person name="Fabret C."/>
            <person name="Ferrari E."/>
            <person name="Foulger D."/>
            <person name="Fritz C."/>
            <person name="Fujita M."/>
            <person name="Fujita Y."/>
            <person name="Fuma S."/>
            <person name="Galizzi A."/>
            <person name="Galleron N."/>
            <person name="Ghim S.-Y."/>
            <person name="Glaser P."/>
            <person name="Goffeau A."/>
            <person name="Golightly E.J."/>
            <person name="Grandi G."/>
            <person name="Guiseppi G."/>
            <person name="Guy B.J."/>
            <person name="Haga K."/>
            <person name="Haiech J."/>
            <person name="Harwood C.R."/>
            <person name="Henaut A."/>
            <person name="Hilbert H."/>
            <person name="Holsappel S."/>
            <person name="Hosono S."/>
            <person name="Hullo M.-F."/>
            <person name="Itaya M."/>
            <person name="Jones L.-M."/>
            <person name="Joris B."/>
            <person name="Karamata D."/>
            <person name="Kasahara Y."/>
            <person name="Klaerr-Blanchard M."/>
            <person name="Klein C."/>
            <person name="Kobayashi Y."/>
            <person name="Koetter P."/>
            <person name="Koningstein G."/>
            <person name="Krogh S."/>
            <person name="Kumano M."/>
            <person name="Kurita K."/>
            <person name="Lapidus A."/>
            <person name="Lardinois S."/>
            <person name="Lauber J."/>
            <person name="Lazarevic V."/>
            <person name="Lee S.-M."/>
            <person name="Levine A."/>
            <person name="Liu H."/>
            <person name="Masuda S."/>
            <person name="Mauel C."/>
            <person name="Medigue C."/>
            <person name="Medina N."/>
            <person name="Mellado R.P."/>
            <person name="Mizuno M."/>
            <person name="Moestl D."/>
            <person name="Nakai S."/>
            <person name="Noback M."/>
            <person name="Noone D."/>
            <person name="O'Reilly M."/>
            <person name="Ogawa K."/>
            <person name="Ogiwara A."/>
            <person name="Oudega B."/>
            <person name="Park S.-H."/>
            <person name="Parro V."/>
            <person name="Pohl T.M."/>
            <person name="Portetelle D."/>
            <person name="Porwollik S."/>
            <person name="Prescott A.M."/>
            <person name="Presecan E."/>
            <person name="Pujic P."/>
            <person name="Purnelle B."/>
            <person name="Rapoport G."/>
            <person name="Rey M."/>
            <person name="Reynolds S."/>
            <person name="Rieger M."/>
            <person name="Rivolta C."/>
            <person name="Rocha E."/>
            <person name="Roche B."/>
            <person name="Rose M."/>
            <person name="Sadaie Y."/>
            <person name="Sato T."/>
            <person name="Scanlan E."/>
            <person name="Schleich S."/>
            <person name="Schroeter R."/>
            <person name="Scoffone F."/>
            <person name="Sekiguchi J."/>
            <person name="Sekowska A."/>
            <person name="Seror S.J."/>
            <person name="Serror P."/>
            <person name="Shin B.-S."/>
            <person name="Soldo B."/>
            <person name="Sorokin A."/>
            <person name="Tacconi E."/>
            <person name="Takagi T."/>
            <person name="Takahashi H."/>
            <person name="Takemaru K."/>
            <person name="Takeuchi M."/>
            <person name="Tamakoshi A."/>
            <person name="Tanaka T."/>
            <person name="Terpstra P."/>
            <person name="Tognoni A."/>
            <person name="Tosato V."/>
            <person name="Uchiyama S."/>
            <person name="Vandenbol M."/>
            <person name="Vannier F."/>
            <person name="Vassarotti A."/>
            <person name="Viari A."/>
            <person name="Wambutt R."/>
            <person name="Wedler E."/>
            <person name="Wedler H."/>
            <person name="Weitzenegger T."/>
            <person name="Winters P."/>
            <person name="Wipat A."/>
            <person name="Yamamoto H."/>
            <person name="Yamane K."/>
            <person name="Yasumoto K."/>
            <person name="Yata K."/>
            <person name="Yoshida K."/>
            <person name="Yoshikawa H.-F."/>
            <person name="Zumstein E."/>
            <person name="Yoshikawa H."/>
            <person name="Danchin A."/>
        </authorList>
    </citation>
    <scope>NUCLEOTIDE SEQUENCE [LARGE SCALE GENOMIC DNA]</scope>
    <source>
        <strain>168</strain>
    </source>
</reference>
<reference key="3">
    <citation type="journal article" date="2001" name="Genome Biol.">
        <title>Extracting biological information from DNA arrays: an unexpected link between arginine and methionine metabolism in Bacillus subtilis.</title>
        <authorList>
            <person name="Sekowska A."/>
            <person name="Robin S."/>
            <person name="Daudin J.-J."/>
            <person name="Henaut A."/>
            <person name="Danchin A."/>
        </authorList>
    </citation>
    <scope>DISRUPTION PHENOTYPE</scope>
    <source>
        <strain>168</strain>
    </source>
</reference>
<reference key="4">
    <citation type="journal article" date="2005" name="J. Bacteriol.">
        <title>Regulation of the Bacillus subtilis ytmI operon, involved in sulfur metabolism.</title>
        <authorList>
            <person name="Burguiere P."/>
            <person name="Fert J."/>
            <person name="Guillouard I."/>
            <person name="Auger S."/>
            <person name="Danchin A."/>
            <person name="Martin-Verstraete I."/>
        </authorList>
    </citation>
    <scope>INDUCTION BY METHIONINE</scope>
</reference>
<reference key="5">
    <citation type="journal article" date="2022" name="Biochemistry">
        <title>Cysteine Dealkylation in Bacillus subtilis by a Novel Flavin-Dependent Monooxygenase.</title>
        <authorList>
            <person name="Hazra S."/>
            <person name="Bhandari D.M."/>
            <person name="Krishnamoorthy K."/>
            <person name="Sekowska A."/>
            <person name="Danchin A."/>
            <person name="Begley T.P."/>
        </authorList>
    </citation>
    <scope>FUNCTION</scope>
    <scope>CATALYTIC ACTIVITY</scope>
    <scope>BIOPHYSICOCHEMICAL PROPERTIES</scope>
    <scope>SUBSTRATE SPECIFICITY</scope>
    <scope>PATHWAY</scope>
</reference>
<reference evidence="10 11" key="6">
    <citation type="submission" date="2005-03" db="PDB data bank">
        <title>Structure of YtnJ from Bacillus subtilis.</title>
        <authorList>
            <consortium name="New York structural genomix research consortium (NYSGXRC)"/>
        </authorList>
    </citation>
    <scope>X-RAY CRYSTALLOGRAPHY (2.1 ANGSTROMS) OF APOENZYME AND IN COMPLEX WITH FMN</scope>
    <scope>SUBUNIT</scope>
</reference>
<reference evidence="12 13" key="7">
    <citation type="submission" date="2017-08" db="PDB data bank">
        <title>Flavin mediated Pummerer type rearrangement in cysteine salvage pathway.</title>
        <authorList>
            <person name="Bhandari D.M."/>
            <person name="Krishnamoorthy K."/>
            <person name="Zhao B."/>
            <person name="Li P."/>
            <person name="Begley T.P."/>
        </authorList>
    </citation>
    <scope>X-RAY CRYSTALLOGRAPHY (1.69 ANGSTROMS) OF APOENZYME AND IN COMPLEX WITH FMN</scope>
</reference>
<feature type="chain" id="PRO_0000360622" description="N-acetyl-S-alkylcysteine sulfoxide monooxygenase">
    <location>
        <begin position="1"/>
        <end position="442"/>
    </location>
</feature>
<feature type="binding site" evidence="4 5 11 13">
    <location>
        <position position="58"/>
    </location>
    <ligand>
        <name>FMN</name>
        <dbReference type="ChEBI" id="CHEBI:58210"/>
    </ligand>
</feature>
<feature type="binding site" evidence="4 5 11 13">
    <location>
        <position position="95"/>
    </location>
    <ligand>
        <name>FMN</name>
        <dbReference type="ChEBI" id="CHEBI:58210"/>
    </ligand>
</feature>
<feature type="binding site" evidence="4 11">
    <location>
        <position position="145"/>
    </location>
    <ligand>
        <name>FMN</name>
        <dbReference type="ChEBI" id="CHEBI:58210"/>
    </ligand>
</feature>
<feature type="binding site" evidence="4 5 11 13">
    <location>
        <position position="149"/>
    </location>
    <ligand>
        <name>FMN</name>
        <dbReference type="ChEBI" id="CHEBI:58210"/>
    </ligand>
</feature>
<feature type="binding site" evidence="4 5 11 13">
    <location>
        <position position="219"/>
    </location>
    <ligand>
        <name>FMN</name>
        <dbReference type="ChEBI" id="CHEBI:58210"/>
    </ligand>
</feature>
<feature type="binding site" evidence="4 5 11 13">
    <location>
        <position position="220"/>
    </location>
    <ligand>
        <name>FMN</name>
        <dbReference type="ChEBI" id="CHEBI:58210"/>
    </ligand>
</feature>
<feature type="strand" evidence="14">
    <location>
        <begin position="8"/>
        <end position="12"/>
    </location>
</feature>
<feature type="strand" evidence="14">
    <location>
        <begin position="18"/>
        <end position="21"/>
    </location>
</feature>
<feature type="helix" evidence="14">
    <location>
        <begin position="22"/>
        <end position="24"/>
    </location>
</feature>
<feature type="helix" evidence="14">
    <location>
        <begin position="32"/>
        <end position="34"/>
    </location>
</feature>
<feature type="helix" evidence="14">
    <location>
        <begin position="36"/>
        <end position="48"/>
    </location>
</feature>
<feature type="strand" evidence="14">
    <location>
        <begin position="52"/>
        <end position="56"/>
    </location>
</feature>
<feature type="helix" evidence="14">
    <location>
        <begin position="68"/>
        <end position="71"/>
    </location>
</feature>
<feature type="helix" evidence="14">
    <location>
        <begin position="76"/>
        <end position="84"/>
    </location>
</feature>
<feature type="strand" evidence="14">
    <location>
        <begin position="91"/>
        <end position="97"/>
    </location>
</feature>
<feature type="turn" evidence="14">
    <location>
        <begin position="98"/>
        <end position="100"/>
    </location>
</feature>
<feature type="helix" evidence="14">
    <location>
        <begin position="103"/>
        <end position="116"/>
    </location>
</feature>
<feature type="strand" evidence="14">
    <location>
        <begin position="121"/>
        <end position="127"/>
    </location>
</feature>
<feature type="helix" evidence="14">
    <location>
        <begin position="131"/>
        <end position="136"/>
    </location>
</feature>
<feature type="helix" evidence="14">
    <location>
        <begin position="145"/>
        <end position="163"/>
    </location>
</feature>
<feature type="turn" evidence="14">
    <location>
        <begin position="175"/>
        <end position="178"/>
    </location>
</feature>
<feature type="helix" evidence="14">
    <location>
        <begin position="183"/>
        <end position="185"/>
    </location>
</feature>
<feature type="strand" evidence="14">
    <location>
        <begin position="213"/>
        <end position="216"/>
    </location>
</feature>
<feature type="helix" evidence="14">
    <location>
        <begin position="221"/>
        <end position="230"/>
    </location>
</feature>
<feature type="strand" evidence="14">
    <location>
        <begin position="232"/>
        <end position="236"/>
    </location>
</feature>
<feature type="helix" evidence="14">
    <location>
        <begin position="241"/>
        <end position="257"/>
    </location>
</feature>
<feature type="helix" evidence="14">
    <location>
        <begin position="262"/>
        <end position="264"/>
    </location>
</feature>
<feature type="strand" evidence="14">
    <location>
        <begin position="265"/>
        <end position="271"/>
    </location>
</feature>
<feature type="helix" evidence="14">
    <location>
        <begin position="279"/>
        <end position="290"/>
    </location>
</feature>
<feature type="helix" evidence="14">
    <location>
        <begin position="295"/>
        <end position="302"/>
    </location>
</feature>
<feature type="helix" evidence="14">
    <location>
        <begin position="303"/>
        <end position="305"/>
    </location>
</feature>
<feature type="helix" evidence="14">
    <location>
        <begin position="311"/>
        <end position="313"/>
    </location>
</feature>
<feature type="helix" evidence="14">
    <location>
        <begin position="333"/>
        <end position="344"/>
    </location>
</feature>
<feature type="helix" evidence="14">
    <location>
        <begin position="349"/>
        <end position="357"/>
    </location>
</feature>
<feature type="strand" evidence="14">
    <location>
        <begin position="362"/>
        <end position="365"/>
    </location>
</feature>
<feature type="helix" evidence="14">
    <location>
        <begin position="367"/>
        <end position="379"/>
    </location>
</feature>
<feature type="strand" evidence="14">
    <location>
        <begin position="384"/>
        <end position="388"/>
    </location>
</feature>
<feature type="helix" evidence="14">
    <location>
        <begin position="395"/>
        <end position="409"/>
    </location>
</feature>
<feature type="helix" evidence="14">
    <location>
        <begin position="422"/>
        <end position="426"/>
    </location>
</feature>
<protein>
    <recommendedName>
        <fullName evidence="8">N-acetyl-S-alkylcysteine sulfoxide monooxygenase</fullName>
        <ecNumber evidence="3">1.14.14.-</ecNumber>
    </recommendedName>
    <alternativeName>
        <fullName evidence="6">N-acetyl-S-alkylcysteine sulfoxide lyase</fullName>
    </alternativeName>
</protein>
<keyword id="KW-0002">3D-structure</keyword>
<keyword id="KW-0285">Flavoprotein</keyword>
<keyword id="KW-0288">FMN</keyword>
<keyword id="KW-0503">Monooxygenase</keyword>
<keyword id="KW-0560">Oxidoreductase</keyword>
<keyword id="KW-1185">Reference proteome</keyword>